<gene>
    <name evidence="1" type="primary">pgi</name>
    <name type="ordered locus">Mmc1_1935</name>
</gene>
<reference key="1">
    <citation type="journal article" date="2009" name="Appl. Environ. Microbiol.">
        <title>Complete genome sequence of the chemolithoautotrophic marine magnetotactic coccus strain MC-1.</title>
        <authorList>
            <person name="Schubbe S."/>
            <person name="Williams T.J."/>
            <person name="Xie G."/>
            <person name="Kiss H.E."/>
            <person name="Brettin T.S."/>
            <person name="Martinez D."/>
            <person name="Ross C.A."/>
            <person name="Schuler D."/>
            <person name="Cox B.L."/>
            <person name="Nealson K.H."/>
            <person name="Bazylinski D.A."/>
        </authorList>
    </citation>
    <scope>NUCLEOTIDE SEQUENCE [LARGE SCALE GENOMIC DNA]</scope>
    <source>
        <strain>ATCC BAA-1437 / JCM 17883 / MC-1</strain>
    </source>
</reference>
<comment type="function">
    <text evidence="1">Catalyzes the reversible isomerization of glucose-6-phosphate to fructose-6-phosphate.</text>
</comment>
<comment type="catalytic activity">
    <reaction evidence="1">
        <text>alpha-D-glucose 6-phosphate = beta-D-fructose 6-phosphate</text>
        <dbReference type="Rhea" id="RHEA:11816"/>
        <dbReference type="ChEBI" id="CHEBI:57634"/>
        <dbReference type="ChEBI" id="CHEBI:58225"/>
        <dbReference type="EC" id="5.3.1.9"/>
    </reaction>
</comment>
<comment type="pathway">
    <text evidence="1">Carbohydrate biosynthesis; gluconeogenesis.</text>
</comment>
<comment type="pathway">
    <text evidence="1">Carbohydrate degradation; glycolysis; D-glyceraldehyde 3-phosphate and glycerone phosphate from D-glucose: step 2/4.</text>
</comment>
<comment type="subcellular location">
    <subcellularLocation>
        <location evidence="1">Cytoplasm</location>
    </subcellularLocation>
</comment>
<comment type="similarity">
    <text evidence="1">Belongs to the GPI family.</text>
</comment>
<protein>
    <recommendedName>
        <fullName evidence="1">Glucose-6-phosphate isomerase</fullName>
        <shortName evidence="1">GPI</shortName>
        <ecNumber evidence="1">5.3.1.9</ecNumber>
    </recommendedName>
    <alternativeName>
        <fullName evidence="1">Phosphoglucose isomerase</fullName>
        <shortName evidence="1">PGI</shortName>
    </alternativeName>
    <alternativeName>
        <fullName evidence="1">Phosphohexose isomerase</fullName>
        <shortName evidence="1">PHI</shortName>
    </alternativeName>
</protein>
<proteinExistence type="inferred from homology"/>
<sequence length="547" mass="60453">MSSLTQLPQWQALQTHLEENRSVQMRDLFDQDSQRFSRFSLQQGELLFDYSKNRITAETMARLLDLARAQDVEGWRDRMFAGEAINETEGRAVLHVALRNRSGRPIRVAGEDVMPAINQVLQQMRQFSEAVRSGAWKGQSGQAITDVVNIGIGGSDLGPVMVCEALKPYHQPGLSVHFVSNVDGTHMAETLKGLNAETTLFIVASKTFTTQETLTNAHTARDWLVAQLGEAAVRKHFVALSTNAEAVSAFGIDTDNMFAFWNWVGGRYSLWSAIGLPIAIAVGFEGFMALHDGAYAMDEHFRTAPLASNMPVIKALIGIWNHNFLGAESFAVLPYDQYLHRLAAYLQQADMESNGKYVTRDGARVDYTTGPVLFGEPGTNGQHSFYQLIHQSTRLVPADFIAAAHTHNPVGDHHAKLLSNFFAQTEALMTGKTAAQVRQELEAAGLHGAALEALVPHKVFDGNRPTNSILVRQFTPYTLGQLIALYEHTIHVQGMVWGINPYDQWGVELGKQLAKKILPELTTPGEVHSHDGSTNGLINHYKAWLAE</sequence>
<dbReference type="EC" id="5.3.1.9" evidence="1"/>
<dbReference type="EMBL" id="CP000471">
    <property type="protein sequence ID" value="ABK44443.1"/>
    <property type="molecule type" value="Genomic_DNA"/>
</dbReference>
<dbReference type="RefSeq" id="WP_011713587.1">
    <property type="nucleotide sequence ID" value="NC_008576.1"/>
</dbReference>
<dbReference type="SMR" id="A0L900"/>
<dbReference type="STRING" id="156889.Mmc1_1935"/>
<dbReference type="KEGG" id="mgm:Mmc1_1935"/>
<dbReference type="eggNOG" id="COG0166">
    <property type="taxonomic scope" value="Bacteria"/>
</dbReference>
<dbReference type="HOGENOM" id="CLU_017947_3_1_5"/>
<dbReference type="OrthoDB" id="140919at2"/>
<dbReference type="UniPathway" id="UPA00109">
    <property type="reaction ID" value="UER00181"/>
</dbReference>
<dbReference type="UniPathway" id="UPA00138"/>
<dbReference type="Proteomes" id="UP000002586">
    <property type="component" value="Chromosome"/>
</dbReference>
<dbReference type="GO" id="GO:0005829">
    <property type="term" value="C:cytosol"/>
    <property type="evidence" value="ECO:0007669"/>
    <property type="project" value="TreeGrafter"/>
</dbReference>
<dbReference type="GO" id="GO:0097367">
    <property type="term" value="F:carbohydrate derivative binding"/>
    <property type="evidence" value="ECO:0007669"/>
    <property type="project" value="InterPro"/>
</dbReference>
<dbReference type="GO" id="GO:0004347">
    <property type="term" value="F:glucose-6-phosphate isomerase activity"/>
    <property type="evidence" value="ECO:0007669"/>
    <property type="project" value="UniProtKB-UniRule"/>
</dbReference>
<dbReference type="GO" id="GO:0048029">
    <property type="term" value="F:monosaccharide binding"/>
    <property type="evidence" value="ECO:0007669"/>
    <property type="project" value="TreeGrafter"/>
</dbReference>
<dbReference type="GO" id="GO:0006094">
    <property type="term" value="P:gluconeogenesis"/>
    <property type="evidence" value="ECO:0007669"/>
    <property type="project" value="UniProtKB-UniRule"/>
</dbReference>
<dbReference type="GO" id="GO:0051156">
    <property type="term" value="P:glucose 6-phosphate metabolic process"/>
    <property type="evidence" value="ECO:0007669"/>
    <property type="project" value="TreeGrafter"/>
</dbReference>
<dbReference type="GO" id="GO:0006096">
    <property type="term" value="P:glycolytic process"/>
    <property type="evidence" value="ECO:0007669"/>
    <property type="project" value="UniProtKB-UniRule"/>
</dbReference>
<dbReference type="CDD" id="cd05015">
    <property type="entry name" value="SIS_PGI_1"/>
    <property type="match status" value="1"/>
</dbReference>
<dbReference type="CDD" id="cd05016">
    <property type="entry name" value="SIS_PGI_2"/>
    <property type="match status" value="1"/>
</dbReference>
<dbReference type="FunFam" id="1.10.1390.10:FF:000001">
    <property type="entry name" value="Glucose-6-phosphate isomerase"/>
    <property type="match status" value="1"/>
</dbReference>
<dbReference type="FunFam" id="3.40.50.10490:FF:000004">
    <property type="entry name" value="Glucose-6-phosphate isomerase"/>
    <property type="match status" value="1"/>
</dbReference>
<dbReference type="Gene3D" id="1.10.1390.10">
    <property type="match status" value="1"/>
</dbReference>
<dbReference type="Gene3D" id="3.40.50.10490">
    <property type="entry name" value="Glucose-6-phosphate isomerase like protein, domain 1"/>
    <property type="match status" value="2"/>
</dbReference>
<dbReference type="HAMAP" id="MF_00473">
    <property type="entry name" value="G6P_isomerase"/>
    <property type="match status" value="1"/>
</dbReference>
<dbReference type="InterPro" id="IPR001672">
    <property type="entry name" value="G6P_Isomerase"/>
</dbReference>
<dbReference type="InterPro" id="IPR023096">
    <property type="entry name" value="G6P_Isomerase_C"/>
</dbReference>
<dbReference type="InterPro" id="IPR018189">
    <property type="entry name" value="Phosphoglucose_isomerase_CS"/>
</dbReference>
<dbReference type="InterPro" id="IPR046348">
    <property type="entry name" value="SIS_dom_sf"/>
</dbReference>
<dbReference type="InterPro" id="IPR035476">
    <property type="entry name" value="SIS_PGI_1"/>
</dbReference>
<dbReference type="InterPro" id="IPR035482">
    <property type="entry name" value="SIS_PGI_2"/>
</dbReference>
<dbReference type="NCBIfam" id="NF001211">
    <property type="entry name" value="PRK00179.1"/>
    <property type="match status" value="1"/>
</dbReference>
<dbReference type="PANTHER" id="PTHR11469">
    <property type="entry name" value="GLUCOSE-6-PHOSPHATE ISOMERASE"/>
    <property type="match status" value="1"/>
</dbReference>
<dbReference type="PANTHER" id="PTHR11469:SF1">
    <property type="entry name" value="GLUCOSE-6-PHOSPHATE ISOMERASE"/>
    <property type="match status" value="1"/>
</dbReference>
<dbReference type="Pfam" id="PF00342">
    <property type="entry name" value="PGI"/>
    <property type="match status" value="1"/>
</dbReference>
<dbReference type="PRINTS" id="PR00662">
    <property type="entry name" value="G6PISOMERASE"/>
</dbReference>
<dbReference type="SUPFAM" id="SSF53697">
    <property type="entry name" value="SIS domain"/>
    <property type="match status" value="1"/>
</dbReference>
<dbReference type="PROSITE" id="PS00765">
    <property type="entry name" value="P_GLUCOSE_ISOMERASE_1"/>
    <property type="match status" value="1"/>
</dbReference>
<dbReference type="PROSITE" id="PS00174">
    <property type="entry name" value="P_GLUCOSE_ISOMERASE_2"/>
    <property type="match status" value="1"/>
</dbReference>
<dbReference type="PROSITE" id="PS51463">
    <property type="entry name" value="P_GLUCOSE_ISOMERASE_3"/>
    <property type="match status" value="1"/>
</dbReference>
<feature type="chain" id="PRO_1000013986" description="Glucose-6-phosphate isomerase">
    <location>
        <begin position="1"/>
        <end position="547"/>
    </location>
</feature>
<feature type="active site" description="Proton donor" evidence="1">
    <location>
        <position position="352"/>
    </location>
</feature>
<feature type="active site" evidence="1">
    <location>
        <position position="383"/>
    </location>
</feature>
<feature type="active site" evidence="1">
    <location>
        <position position="511"/>
    </location>
</feature>
<organism>
    <name type="scientific">Magnetococcus marinus (strain ATCC BAA-1437 / JCM 17883 / MC-1)</name>
    <dbReference type="NCBI Taxonomy" id="156889"/>
    <lineage>
        <taxon>Bacteria</taxon>
        <taxon>Pseudomonadati</taxon>
        <taxon>Pseudomonadota</taxon>
        <taxon>Alphaproteobacteria</taxon>
        <taxon>Magnetococcales</taxon>
        <taxon>Magnetococcaceae</taxon>
        <taxon>Magnetococcus</taxon>
    </lineage>
</organism>
<evidence type="ECO:0000255" key="1">
    <source>
        <dbReference type="HAMAP-Rule" id="MF_00473"/>
    </source>
</evidence>
<keyword id="KW-0963">Cytoplasm</keyword>
<keyword id="KW-0312">Gluconeogenesis</keyword>
<keyword id="KW-0324">Glycolysis</keyword>
<keyword id="KW-0413">Isomerase</keyword>
<keyword id="KW-1185">Reference proteome</keyword>
<name>G6PI_MAGMM</name>
<accession>A0L900</accession>